<feature type="chain" id="PRO_0000067898" description="DNA-directed RNA polymerase subunit beta'">
    <location>
        <begin position="1"/>
        <end position="677"/>
    </location>
</feature>
<feature type="binding site" evidence="1">
    <location>
        <position position="69"/>
    </location>
    <ligand>
        <name>Zn(2+)</name>
        <dbReference type="ChEBI" id="CHEBI:29105"/>
    </ligand>
</feature>
<feature type="binding site" evidence="1">
    <location>
        <position position="71"/>
    </location>
    <ligand>
        <name>Zn(2+)</name>
        <dbReference type="ChEBI" id="CHEBI:29105"/>
    </ligand>
</feature>
<feature type="binding site" evidence="1">
    <location>
        <position position="87"/>
    </location>
    <ligand>
        <name>Zn(2+)</name>
        <dbReference type="ChEBI" id="CHEBI:29105"/>
    </ligand>
</feature>
<feature type="binding site" evidence="1">
    <location>
        <position position="90"/>
    </location>
    <ligand>
        <name>Zn(2+)</name>
        <dbReference type="ChEBI" id="CHEBI:29105"/>
    </ligand>
</feature>
<feature type="binding site" evidence="1">
    <location>
        <position position="489"/>
    </location>
    <ligand>
        <name>Mg(2+)</name>
        <dbReference type="ChEBI" id="CHEBI:18420"/>
    </ligand>
</feature>
<feature type="binding site" evidence="1">
    <location>
        <position position="491"/>
    </location>
    <ligand>
        <name>Mg(2+)</name>
        <dbReference type="ChEBI" id="CHEBI:18420"/>
    </ligand>
</feature>
<feature type="binding site" evidence="1">
    <location>
        <position position="493"/>
    </location>
    <ligand>
        <name>Mg(2+)</name>
        <dbReference type="ChEBI" id="CHEBI:18420"/>
    </ligand>
</feature>
<feature type="strand" evidence="2">
    <location>
        <begin position="9"/>
        <end position="11"/>
    </location>
</feature>
<feature type="helix" evidence="2">
    <location>
        <begin position="17"/>
        <end position="24"/>
    </location>
</feature>
<feature type="strand" evidence="2">
    <location>
        <begin position="45"/>
        <end position="48"/>
    </location>
</feature>
<feature type="strand" evidence="2">
    <location>
        <begin position="52"/>
        <end position="54"/>
    </location>
</feature>
<feature type="turn" evidence="2">
    <location>
        <begin position="58"/>
        <end position="60"/>
    </location>
</feature>
<feature type="strand" evidence="2">
    <location>
        <begin position="64"/>
        <end position="68"/>
    </location>
</feature>
<feature type="strand" evidence="2">
    <location>
        <begin position="70"/>
        <end position="72"/>
    </location>
</feature>
<feature type="strand" evidence="2">
    <location>
        <begin position="79"/>
        <end position="82"/>
    </location>
</feature>
<feature type="helix" evidence="2">
    <location>
        <begin position="97"/>
        <end position="101"/>
    </location>
</feature>
<feature type="strand" evidence="2">
    <location>
        <begin position="105"/>
        <end position="114"/>
    </location>
</feature>
<feature type="helix" evidence="2">
    <location>
        <begin position="116"/>
        <end position="120"/>
    </location>
</feature>
<feature type="helix" evidence="2">
    <location>
        <begin position="125"/>
        <end position="130"/>
    </location>
</feature>
<feature type="helix" evidence="2">
    <location>
        <begin position="134"/>
        <end position="140"/>
    </location>
</feature>
<feature type="turn" evidence="2">
    <location>
        <begin position="141"/>
        <end position="143"/>
    </location>
</feature>
<feature type="helix" evidence="2">
    <location>
        <begin position="169"/>
        <end position="172"/>
    </location>
</feature>
<feature type="helix" evidence="2">
    <location>
        <begin position="175"/>
        <end position="178"/>
    </location>
</feature>
<feature type="helix" evidence="2">
    <location>
        <begin position="185"/>
        <end position="188"/>
    </location>
</feature>
<feature type="helix" evidence="2">
    <location>
        <begin position="196"/>
        <end position="203"/>
    </location>
</feature>
<feature type="helix" evidence="2">
    <location>
        <begin position="208"/>
        <end position="223"/>
    </location>
</feature>
<feature type="helix" evidence="2">
    <location>
        <begin position="231"/>
        <end position="255"/>
    </location>
</feature>
<feature type="helix" evidence="2">
    <location>
        <begin position="261"/>
        <end position="264"/>
    </location>
</feature>
<feature type="strand" evidence="2">
    <location>
        <begin position="265"/>
        <end position="271"/>
    </location>
</feature>
<feature type="helix" evidence="2">
    <location>
        <begin position="291"/>
        <end position="311"/>
    </location>
</feature>
<feature type="helix" evidence="2">
    <location>
        <begin position="319"/>
        <end position="336"/>
    </location>
</feature>
<feature type="strand" evidence="2">
    <location>
        <begin position="340"/>
        <end position="343"/>
    </location>
</feature>
<feature type="helix" evidence="2">
    <location>
        <begin position="356"/>
        <end position="360"/>
    </location>
</feature>
<feature type="turn" evidence="2">
    <location>
        <begin position="366"/>
        <end position="372"/>
    </location>
</feature>
<feature type="strand" evidence="2">
    <location>
        <begin position="377"/>
        <end position="380"/>
    </location>
</feature>
<feature type="strand" evidence="2">
    <location>
        <begin position="384"/>
        <end position="386"/>
    </location>
</feature>
<feature type="strand" evidence="2">
    <location>
        <begin position="388"/>
        <end position="390"/>
    </location>
</feature>
<feature type="strand" evidence="2">
    <location>
        <begin position="394"/>
        <end position="398"/>
    </location>
</feature>
<feature type="helix" evidence="2">
    <location>
        <begin position="399"/>
        <end position="403"/>
    </location>
</feature>
<feature type="helix" evidence="2">
    <location>
        <begin position="407"/>
        <end position="416"/>
    </location>
</feature>
<feature type="helix" evidence="2">
    <location>
        <begin position="423"/>
        <end position="431"/>
    </location>
</feature>
<feature type="helix" evidence="2">
    <location>
        <begin position="435"/>
        <end position="440"/>
    </location>
</feature>
<feature type="turn" evidence="2">
    <location>
        <begin position="441"/>
        <end position="443"/>
    </location>
</feature>
<feature type="strand" evidence="2">
    <location>
        <begin position="450"/>
        <end position="456"/>
    </location>
</feature>
<feature type="helix" evidence="2">
    <location>
        <begin position="460"/>
        <end position="462"/>
    </location>
</feature>
<feature type="strand" evidence="2">
    <location>
        <begin position="463"/>
        <end position="478"/>
    </location>
</feature>
<feature type="helix" evidence="2">
    <location>
        <begin position="483"/>
        <end position="486"/>
    </location>
</feature>
<feature type="strand" evidence="2">
    <location>
        <begin position="490"/>
        <end position="492"/>
    </location>
</feature>
<feature type="strand" evidence="2">
    <location>
        <begin position="495"/>
        <end position="498"/>
    </location>
</feature>
<feature type="helix" evidence="2">
    <location>
        <begin position="503"/>
        <end position="512"/>
    </location>
</feature>
<feature type="turn" evidence="2">
    <location>
        <begin position="522"/>
        <end position="524"/>
    </location>
</feature>
<feature type="strand" evidence="2">
    <location>
        <begin position="527"/>
        <end position="529"/>
    </location>
</feature>
<feature type="helix" evidence="2">
    <location>
        <begin position="533"/>
        <end position="542"/>
    </location>
</feature>
<feature type="turn" evidence="2">
    <location>
        <begin position="550"/>
        <end position="552"/>
    </location>
</feature>
<feature type="strand" evidence="2">
    <location>
        <begin position="566"/>
        <end position="569"/>
    </location>
</feature>
<feature type="strand" evidence="2">
    <location>
        <begin position="580"/>
        <end position="583"/>
    </location>
</feature>
<feature type="helix" evidence="2">
    <location>
        <begin position="584"/>
        <end position="592"/>
    </location>
</feature>
<feature type="strand" evidence="2">
    <location>
        <begin position="602"/>
        <end position="605"/>
    </location>
</feature>
<feature type="strand" evidence="2">
    <location>
        <begin position="620"/>
        <end position="624"/>
    </location>
</feature>
<feature type="strand" evidence="2">
    <location>
        <begin position="626"/>
        <end position="628"/>
    </location>
</feature>
<feature type="strand" evidence="2">
    <location>
        <begin position="631"/>
        <end position="633"/>
    </location>
</feature>
<feature type="strand" evidence="2">
    <location>
        <begin position="635"/>
        <end position="640"/>
    </location>
</feature>
<feature type="strand" evidence="2">
    <location>
        <begin position="643"/>
        <end position="645"/>
    </location>
</feature>
<feature type="strand" evidence="2">
    <location>
        <begin position="649"/>
        <end position="654"/>
    </location>
</feature>
<feature type="helix" evidence="2">
    <location>
        <begin position="656"/>
        <end position="675"/>
    </location>
</feature>
<evidence type="ECO:0000255" key="1">
    <source>
        <dbReference type="HAMAP-Rule" id="MF_01323"/>
    </source>
</evidence>
<evidence type="ECO:0007829" key="2">
    <source>
        <dbReference type="PDB" id="8XZV"/>
    </source>
</evidence>
<proteinExistence type="evidence at protein level"/>
<sequence>MIDQYKHQQLRIGSVSPQQISAWATKILPNGEIVGEVTKPYTFHYKTNKPEKDGLFCERIFGPIKSGICACGNYRVIGDEKEDPKFCEQCGVEFVDSRIRRYQMGYIKLACPVTHVWYLKRLPSYIANFLDKPLKELEGLVYCDFSFARPIAKKPTFLRLRGLFEYEIQSWKYSIPLFFTTQGFDTFRNREISTGAGAIREQLADLDLRTIIDYSFAEWKELGEEGSTGNEWEDRKVGRRKDFLVRRMELVKHFIRTNIEPEWMVLCLLPVLPPELRPIIQIDGGKLMSSDINELYRRVIYRNNTLTDLLSTSRSTPGELVMCQEKLVQEAVDTLLDNGIRGQPMRDGHNKVYKSFSDVIEGKEGRFRETLLGKRVDYSGRSVIVVGPSLSLHRCGLPREIAIELFQTFVIRGLIRQHLASNIGVAKRKIREKEPIVWKILQEVMQGHPVLLNRAPTLHRLGIQAFQPILVEGRAICLHPLVCKGFNADFDGDQMAVHVPLSLEAQAEARLLMFSHMNLLSPAIGDPISVPTQDMLIGLYILTSGNRRGICANRYNPWNHKTYQNERIDDTNYKSMKEPFFCNFYDAIGAYRQKRIHLDSPLWLRWQLDQRIIASKEAPIEVHYESLGTYHEIYAHYLIIRSVKKEIIDIYIRTTVGHISLYREIEEAIQGFYQACS</sequence>
<dbReference type="EC" id="2.7.7.6" evidence="1"/>
<dbReference type="EMBL" id="AJ400848">
    <property type="protein sequence ID" value="CAB88716.1"/>
    <property type="molecule type" value="Genomic_DNA"/>
</dbReference>
<dbReference type="PIR" id="B29959">
    <property type="entry name" value="B29959"/>
</dbReference>
<dbReference type="RefSeq" id="NP_054923.1">
    <property type="nucleotide sequence ID" value="NC_002202.1"/>
</dbReference>
<dbReference type="PDB" id="8XZV">
    <property type="method" value="EM"/>
    <property type="resolution" value="3.16 A"/>
    <property type="chains" value="C=1-677"/>
</dbReference>
<dbReference type="PDBsum" id="8XZV"/>
<dbReference type="EMDB" id="EMD-38799"/>
<dbReference type="SMR" id="P11705"/>
<dbReference type="FunCoup" id="P11705">
    <property type="interactions" value="69"/>
</dbReference>
<dbReference type="STRING" id="3562.P11705"/>
<dbReference type="GeneID" id="2715633"/>
<dbReference type="KEGG" id="soe:2715633"/>
<dbReference type="InParanoid" id="P11705"/>
<dbReference type="OrthoDB" id="1862828at2759"/>
<dbReference type="Proteomes" id="UP001155700">
    <property type="component" value="Chloroplast Pltd"/>
</dbReference>
<dbReference type="GO" id="GO:0009507">
    <property type="term" value="C:chloroplast"/>
    <property type="evidence" value="ECO:0007669"/>
    <property type="project" value="UniProtKB-SubCell"/>
</dbReference>
<dbReference type="GO" id="GO:0000428">
    <property type="term" value="C:DNA-directed RNA polymerase complex"/>
    <property type="evidence" value="ECO:0007669"/>
    <property type="project" value="UniProtKB-KW"/>
</dbReference>
<dbReference type="GO" id="GO:0005739">
    <property type="term" value="C:mitochondrion"/>
    <property type="evidence" value="ECO:0007669"/>
    <property type="project" value="GOC"/>
</dbReference>
<dbReference type="GO" id="GO:0003677">
    <property type="term" value="F:DNA binding"/>
    <property type="evidence" value="ECO:0007669"/>
    <property type="project" value="UniProtKB-UniRule"/>
</dbReference>
<dbReference type="GO" id="GO:0003899">
    <property type="term" value="F:DNA-directed RNA polymerase activity"/>
    <property type="evidence" value="ECO:0007669"/>
    <property type="project" value="UniProtKB-UniRule"/>
</dbReference>
<dbReference type="GO" id="GO:0000287">
    <property type="term" value="F:magnesium ion binding"/>
    <property type="evidence" value="ECO:0007669"/>
    <property type="project" value="UniProtKB-UniRule"/>
</dbReference>
<dbReference type="GO" id="GO:0008270">
    <property type="term" value="F:zinc ion binding"/>
    <property type="evidence" value="ECO:0007669"/>
    <property type="project" value="UniProtKB-UniRule"/>
</dbReference>
<dbReference type="GO" id="GO:0006351">
    <property type="term" value="P:DNA-templated transcription"/>
    <property type="evidence" value="ECO:0007669"/>
    <property type="project" value="UniProtKB-UniRule"/>
</dbReference>
<dbReference type="FunFam" id="4.10.860.120:FF:000007">
    <property type="entry name" value="DNA-directed RNA polymerase subunit gamma"/>
    <property type="match status" value="1"/>
</dbReference>
<dbReference type="Gene3D" id="1.10.40.90">
    <property type="match status" value="1"/>
</dbReference>
<dbReference type="Gene3D" id="2.40.40.20">
    <property type="match status" value="1"/>
</dbReference>
<dbReference type="Gene3D" id="4.10.860.120">
    <property type="entry name" value="RNA polymerase II, clamp domain"/>
    <property type="match status" value="1"/>
</dbReference>
<dbReference type="Gene3D" id="1.10.274.100">
    <property type="entry name" value="RNA polymerase Rpb1, domain 3"/>
    <property type="match status" value="1"/>
</dbReference>
<dbReference type="HAMAP" id="MF_01323">
    <property type="entry name" value="RNApol_bact_RpoC1"/>
    <property type="match status" value="1"/>
</dbReference>
<dbReference type="InterPro" id="IPR045867">
    <property type="entry name" value="DNA-dir_RpoC_beta_prime"/>
</dbReference>
<dbReference type="InterPro" id="IPR000722">
    <property type="entry name" value="RNA_pol_asu"/>
</dbReference>
<dbReference type="InterPro" id="IPR006592">
    <property type="entry name" value="RNA_pol_N"/>
</dbReference>
<dbReference type="InterPro" id="IPR007080">
    <property type="entry name" value="RNA_pol_Rpb1_1"/>
</dbReference>
<dbReference type="InterPro" id="IPR042102">
    <property type="entry name" value="RNA_pol_Rpb1_3_sf"/>
</dbReference>
<dbReference type="InterPro" id="IPR044893">
    <property type="entry name" value="RNA_pol_Rpb1_clamp_domain"/>
</dbReference>
<dbReference type="InterPro" id="IPR034678">
    <property type="entry name" value="RNApol_RpoC1"/>
</dbReference>
<dbReference type="PANTHER" id="PTHR19376">
    <property type="entry name" value="DNA-DIRECTED RNA POLYMERASE"/>
    <property type="match status" value="1"/>
</dbReference>
<dbReference type="PANTHER" id="PTHR19376:SF54">
    <property type="entry name" value="DNA-DIRECTED RNA POLYMERASE SUBUNIT BETA"/>
    <property type="match status" value="1"/>
</dbReference>
<dbReference type="Pfam" id="PF04997">
    <property type="entry name" value="RNA_pol_Rpb1_1"/>
    <property type="match status" value="1"/>
</dbReference>
<dbReference type="Pfam" id="PF00623">
    <property type="entry name" value="RNA_pol_Rpb1_2"/>
    <property type="match status" value="2"/>
</dbReference>
<dbReference type="SMART" id="SM00663">
    <property type="entry name" value="RPOLA_N"/>
    <property type="match status" value="1"/>
</dbReference>
<dbReference type="SUPFAM" id="SSF64484">
    <property type="entry name" value="beta and beta-prime subunits of DNA dependent RNA-polymerase"/>
    <property type="match status" value="1"/>
</dbReference>
<accession>P11705</accession>
<protein>
    <recommendedName>
        <fullName evidence="1">DNA-directed RNA polymerase subunit beta'</fullName>
        <ecNumber evidence="1">2.7.7.6</ecNumber>
    </recommendedName>
    <alternativeName>
        <fullName evidence="1">PEP</fullName>
    </alternativeName>
    <alternativeName>
        <fullName evidence="1">Plastid-encoded RNA polymerase subunit beta'</fullName>
        <shortName evidence="1">RNA polymerase subunit beta'</shortName>
    </alternativeName>
</protein>
<geneLocation type="chloroplast"/>
<organism>
    <name type="scientific">Spinacia oleracea</name>
    <name type="common">Spinach</name>
    <dbReference type="NCBI Taxonomy" id="3562"/>
    <lineage>
        <taxon>Eukaryota</taxon>
        <taxon>Viridiplantae</taxon>
        <taxon>Streptophyta</taxon>
        <taxon>Embryophyta</taxon>
        <taxon>Tracheophyta</taxon>
        <taxon>Spermatophyta</taxon>
        <taxon>Magnoliopsida</taxon>
        <taxon>eudicotyledons</taxon>
        <taxon>Gunneridae</taxon>
        <taxon>Pentapetalae</taxon>
        <taxon>Caryophyllales</taxon>
        <taxon>Chenopodiaceae</taxon>
        <taxon>Chenopodioideae</taxon>
        <taxon>Anserineae</taxon>
        <taxon>Spinacia</taxon>
    </lineage>
</organism>
<comment type="function">
    <text evidence="1">DNA-dependent RNA polymerase catalyzes the transcription of DNA into RNA using the four ribonucleoside triphosphates as substrates.</text>
</comment>
<comment type="catalytic activity">
    <reaction evidence="1">
        <text>RNA(n) + a ribonucleoside 5'-triphosphate = RNA(n+1) + diphosphate</text>
        <dbReference type="Rhea" id="RHEA:21248"/>
        <dbReference type="Rhea" id="RHEA-COMP:14527"/>
        <dbReference type="Rhea" id="RHEA-COMP:17342"/>
        <dbReference type="ChEBI" id="CHEBI:33019"/>
        <dbReference type="ChEBI" id="CHEBI:61557"/>
        <dbReference type="ChEBI" id="CHEBI:140395"/>
        <dbReference type="EC" id="2.7.7.6"/>
    </reaction>
</comment>
<comment type="cofactor">
    <cofactor evidence="1">
        <name>Mg(2+)</name>
        <dbReference type="ChEBI" id="CHEBI:18420"/>
    </cofactor>
    <text evidence="1">Binds 1 Mg(2+) ion per subunit.</text>
</comment>
<comment type="cofactor">
    <cofactor evidence="1">
        <name>Zn(2+)</name>
        <dbReference type="ChEBI" id="CHEBI:29105"/>
    </cofactor>
    <text evidence="1">Binds 1 Zn(2+) ion per subunit.</text>
</comment>
<comment type="subunit">
    <text evidence="1">In plastids the minimal PEP RNA polymerase catalytic core is composed of four subunits: alpha, beta, beta', and beta''. When a (nuclear-encoded) sigma factor is associated with the core the holoenzyme is formed, which can initiate transcription.</text>
</comment>
<comment type="subcellular location">
    <subcellularLocation>
        <location evidence="1">Plastid</location>
        <location evidence="1">Chloroplast</location>
    </subcellularLocation>
</comment>
<comment type="similarity">
    <text evidence="1">Belongs to the RNA polymerase beta' chain family. RpoC1 subfamily.</text>
</comment>
<name>RPOC1_SPIOL</name>
<gene>
    <name evidence="1" type="primary">rpoC1</name>
</gene>
<keyword id="KW-0002">3D-structure</keyword>
<keyword id="KW-0150">Chloroplast</keyword>
<keyword id="KW-0240">DNA-directed RNA polymerase</keyword>
<keyword id="KW-0460">Magnesium</keyword>
<keyword id="KW-0479">Metal-binding</keyword>
<keyword id="KW-0548">Nucleotidyltransferase</keyword>
<keyword id="KW-0934">Plastid</keyword>
<keyword id="KW-1185">Reference proteome</keyword>
<keyword id="KW-0804">Transcription</keyword>
<keyword id="KW-0808">Transferase</keyword>
<keyword id="KW-0862">Zinc</keyword>
<reference key="1">
    <citation type="journal article" date="1988" name="J. Mol. Biol.">
        <title>Spinach chloroplast rpoBC genes encode three subunits of the chloroplast RNA polymerase.</title>
        <authorList>
            <person name="Hudson G.S."/>
            <person name="Holton T.A."/>
            <person name="Whitfeld P.R."/>
            <person name="Bottomley W."/>
        </authorList>
    </citation>
    <scope>NUCLEOTIDE SEQUENCE [GENOMIC DNA]</scope>
</reference>
<reference key="2">
    <citation type="journal article" date="2001" name="Plant Mol. Biol.">
        <title>The plastid chromosome of spinach (Spinacia oleracea): complete nucleotide sequence and gene organization.</title>
        <authorList>
            <person name="Schmitz-Linneweber C."/>
            <person name="Maier R.M."/>
            <person name="Alcaraz J.-P."/>
            <person name="Cottet A."/>
            <person name="Herrmann R.G."/>
            <person name="Mache R."/>
        </authorList>
    </citation>
    <scope>NUCLEOTIDE SEQUENCE [LARGE SCALE GENOMIC DNA]</scope>
    <source>
        <strain>cv. Geant d'hiver</strain>
        <strain>cv. Monatol</strain>
    </source>
</reference>